<dbReference type="EMBL" id="D37967">
    <property type="protein sequence ID" value="BAA07183.1"/>
    <property type="molecule type" value="Genomic_DNA"/>
</dbReference>
<dbReference type="PIR" id="PC4009">
    <property type="entry name" value="PC4009"/>
</dbReference>
<dbReference type="SMR" id="Q45825"/>
<dbReference type="GO" id="GO:0016799">
    <property type="term" value="F:hydrolase activity, hydrolyzing N-glycosyl compounds"/>
    <property type="evidence" value="ECO:0007669"/>
    <property type="project" value="InterPro"/>
</dbReference>
<dbReference type="Gene3D" id="3.90.245.10">
    <property type="entry name" value="Ribonucleoside hydrolase-like"/>
    <property type="match status" value="1"/>
</dbReference>
<dbReference type="InterPro" id="IPR001910">
    <property type="entry name" value="Inosine/uridine_hydrolase_dom"/>
</dbReference>
<dbReference type="InterPro" id="IPR052775">
    <property type="entry name" value="IUN_hydrolase"/>
</dbReference>
<dbReference type="InterPro" id="IPR036452">
    <property type="entry name" value="Ribo_hydro-like"/>
</dbReference>
<dbReference type="PANTHER" id="PTHR46190:SF1">
    <property type="entry name" value="SI:CH211-201H21.5"/>
    <property type="match status" value="1"/>
</dbReference>
<dbReference type="PANTHER" id="PTHR46190">
    <property type="entry name" value="SI:CH211-201H21.5-RELATED"/>
    <property type="match status" value="1"/>
</dbReference>
<dbReference type="Pfam" id="PF01156">
    <property type="entry name" value="IU_nuc_hydro"/>
    <property type="match status" value="1"/>
</dbReference>
<dbReference type="SUPFAM" id="SSF53590">
    <property type="entry name" value="Nucleoside hydrolase"/>
    <property type="match status" value="1"/>
</dbReference>
<feature type="chain" id="PRO_0000206842" description="Uncharacterized protein in ribF 3'region">
    <location>
        <begin position="1"/>
        <end position="92" status="greater than"/>
    </location>
</feature>
<feature type="non-terminal residue">
    <location>
        <position position="92"/>
    </location>
</feature>
<accession>Q45825</accession>
<organism>
    <name type="scientific">Corynebacterium ammoniagenes</name>
    <name type="common">Brevibacterium ammoniagenes</name>
    <dbReference type="NCBI Taxonomy" id="1697"/>
    <lineage>
        <taxon>Bacteria</taxon>
        <taxon>Bacillati</taxon>
        <taxon>Actinomycetota</taxon>
        <taxon>Actinomycetes</taxon>
        <taxon>Mycobacteriales</taxon>
        <taxon>Corynebacteriaceae</taxon>
        <taxon>Corynebacterium</taxon>
    </lineage>
</organism>
<proteinExistence type="inferred from homology"/>
<reference key="1">
    <citation type="journal article" date="1995" name="Biosci. Biotechnol. Biochem.">
        <title>Nucleotide sequence of the FAD synthetase gene from Corynebacterium ammoniagenes and its expression in Escherichia coli.</title>
        <authorList>
            <person name="Nakagawa S."/>
            <person name="Igarashi A."/>
            <person name="Ohta T."/>
            <person name="Hagihara T."/>
            <person name="Fujio T."/>
            <person name="Aisaka K."/>
        </authorList>
    </citation>
    <scope>NUCLEOTIDE SEQUENCE [GENOMIC DNA]</scope>
    <source>
        <strain>ATCC 6872 / DSM 20305 / IAM 1645 / KCTC 1019 / NCTC 2399</strain>
    </source>
</reference>
<name>YRI3_CORAM</name>
<protein>
    <recommendedName>
        <fullName>Uncharacterized protein in ribF 3'region</fullName>
    </recommendedName>
</protein>
<sequence>MKMILDLDTGIDDAFALAYAIAHPGIDLIGVTGTYGNVTIEQGMANTQALLTLLGAADVPVYAGRAIDGFEVSEASARIHGRNGVGEVDIAA</sequence>
<evidence type="ECO:0000305" key="1"/>
<comment type="similarity">
    <text evidence="1">Belongs to the IUNH family.</text>
</comment>